<name>YJIK_ECO57</name>
<gene>
    <name type="primary">yjiK</name>
    <name type="ordered locus">Z5934</name>
    <name type="ordered locus">ECs5294</name>
</gene>
<evidence type="ECO:0000255" key="1"/>
<evidence type="ECO:0000255" key="2">
    <source>
        <dbReference type="PROSITE-ProRule" id="PRU00303"/>
    </source>
</evidence>
<evidence type="ECO:0000305" key="3"/>
<organism>
    <name type="scientific">Escherichia coli O157:H7</name>
    <dbReference type="NCBI Taxonomy" id="83334"/>
    <lineage>
        <taxon>Bacteria</taxon>
        <taxon>Pseudomonadati</taxon>
        <taxon>Pseudomonadota</taxon>
        <taxon>Gammaproteobacteria</taxon>
        <taxon>Enterobacterales</taxon>
        <taxon>Enterobacteriaceae</taxon>
        <taxon>Escherichia</taxon>
    </lineage>
</organism>
<sequence>MKKRITFIVFLCAIVAASLFFVQSCVRKSQHVAGFQNYQATIDGKEITGVTKNISSLTWSAQSNTLFSTINKPATIVEMTTEGDLIRTIPLDFVKDLETIEYIGDNKFVISDERDYAIYVISLNADSEVSILKKIKIPLQETPTNCGFEGLAYSSQDHTFWFFKEKNPIEVYKVTGLLRSDELHISKDKTLQRQFTLDDVSGAEFNPQKNTLLVLSHESRALQEVTVRGDVIGEMSLTKGKYGLSHNIKQAEGIAMDDSGNIYIVGEPNLFYRFTSTKSR</sequence>
<feature type="chain" id="PRO_0000294102" description="Uncharacterized protein YjiK">
    <location>
        <begin position="1"/>
        <end position="280"/>
    </location>
</feature>
<feature type="transmembrane region" description="Helical" evidence="1">
    <location>
        <begin position="5"/>
        <end position="25"/>
    </location>
</feature>
<accession>Q8XB94</accession>
<accession>Q7A8L4</accession>
<comment type="subcellular location">
    <subcellularLocation>
        <location evidence="2">Cell membrane</location>
        <topology evidence="3">Single-pass membrane protein</topology>
    </subcellularLocation>
</comment>
<comment type="similarity">
    <text evidence="3">Belongs to the YjiK family.</text>
</comment>
<comment type="sequence caution" evidence="3">
    <conflict type="erroneous initiation">
        <sequence resource="EMBL-CDS" id="AAG59517"/>
    </conflict>
    <text>Extended N-terminus.</text>
</comment>
<protein>
    <recommendedName>
        <fullName>Uncharacterized protein YjiK</fullName>
    </recommendedName>
</protein>
<keyword id="KW-1003">Cell membrane</keyword>
<keyword id="KW-0472">Membrane</keyword>
<keyword id="KW-1185">Reference proteome</keyword>
<keyword id="KW-0812">Transmembrane</keyword>
<keyword id="KW-1133">Transmembrane helix</keyword>
<dbReference type="EMBL" id="AE005174">
    <property type="protein sequence ID" value="AAG59517.1"/>
    <property type="status" value="ALT_INIT"/>
    <property type="molecule type" value="Genomic_DNA"/>
</dbReference>
<dbReference type="EMBL" id="BA000007">
    <property type="protein sequence ID" value="BAB38717.2"/>
    <property type="molecule type" value="Genomic_DNA"/>
</dbReference>
<dbReference type="PIR" id="A86132">
    <property type="entry name" value="A86132"/>
</dbReference>
<dbReference type="PIR" id="F91290">
    <property type="entry name" value="F91290"/>
</dbReference>
<dbReference type="RefSeq" id="NP_313321.2">
    <property type="nucleotide sequence ID" value="NC_002695.1"/>
</dbReference>
<dbReference type="SMR" id="Q8XB94"/>
<dbReference type="STRING" id="155864.Z5934"/>
<dbReference type="GeneID" id="913645"/>
<dbReference type="KEGG" id="ece:Z5934"/>
<dbReference type="KEGG" id="ecs:ECs_5294"/>
<dbReference type="PATRIC" id="fig|386585.9.peg.5536"/>
<dbReference type="eggNOG" id="COG3204">
    <property type="taxonomic scope" value="Bacteria"/>
</dbReference>
<dbReference type="HOGENOM" id="CLU_055438_1_1_6"/>
<dbReference type="OMA" id="KERDPML"/>
<dbReference type="Proteomes" id="UP000000558">
    <property type="component" value="Chromosome"/>
</dbReference>
<dbReference type="Proteomes" id="UP000002519">
    <property type="component" value="Chromosome"/>
</dbReference>
<dbReference type="GO" id="GO:0005886">
    <property type="term" value="C:plasma membrane"/>
    <property type="evidence" value="ECO:0007669"/>
    <property type="project" value="UniProtKB-SubCell"/>
</dbReference>
<dbReference type="CDD" id="cd09971">
    <property type="entry name" value="SdiA-regulated"/>
    <property type="match status" value="1"/>
</dbReference>
<dbReference type="Gene3D" id="2.120.10.30">
    <property type="entry name" value="TolB, C-terminal domain"/>
    <property type="match status" value="1"/>
</dbReference>
<dbReference type="InterPro" id="IPR011042">
    <property type="entry name" value="6-blade_b-propeller_TolB-like"/>
</dbReference>
<dbReference type="InterPro" id="IPR009722">
    <property type="entry name" value="YjiK/CarP"/>
</dbReference>
<dbReference type="Pfam" id="PF06977">
    <property type="entry name" value="SdiA-regulated"/>
    <property type="match status" value="1"/>
</dbReference>
<dbReference type="SUPFAM" id="SSF50956">
    <property type="entry name" value="Thermostable phytase (3-phytase)"/>
    <property type="match status" value="1"/>
</dbReference>
<dbReference type="PROSITE" id="PS51257">
    <property type="entry name" value="PROKAR_LIPOPROTEIN"/>
    <property type="match status" value="1"/>
</dbReference>
<proteinExistence type="inferred from homology"/>
<reference key="1">
    <citation type="journal article" date="2001" name="Nature">
        <title>Genome sequence of enterohaemorrhagic Escherichia coli O157:H7.</title>
        <authorList>
            <person name="Perna N.T."/>
            <person name="Plunkett G. III"/>
            <person name="Burland V."/>
            <person name="Mau B."/>
            <person name="Glasner J.D."/>
            <person name="Rose D.J."/>
            <person name="Mayhew G.F."/>
            <person name="Evans P.S."/>
            <person name="Gregor J."/>
            <person name="Kirkpatrick H.A."/>
            <person name="Posfai G."/>
            <person name="Hackett J."/>
            <person name="Klink S."/>
            <person name="Boutin A."/>
            <person name="Shao Y."/>
            <person name="Miller L."/>
            <person name="Grotbeck E.J."/>
            <person name="Davis N.W."/>
            <person name="Lim A."/>
            <person name="Dimalanta E.T."/>
            <person name="Potamousis K."/>
            <person name="Apodaca J."/>
            <person name="Anantharaman T.S."/>
            <person name="Lin J."/>
            <person name="Yen G."/>
            <person name="Schwartz D.C."/>
            <person name="Welch R.A."/>
            <person name="Blattner F.R."/>
        </authorList>
    </citation>
    <scope>NUCLEOTIDE SEQUENCE [LARGE SCALE GENOMIC DNA]</scope>
    <source>
        <strain>O157:H7 / EDL933 / ATCC 700927 / EHEC</strain>
    </source>
</reference>
<reference key="2">
    <citation type="journal article" date="2001" name="DNA Res.">
        <title>Complete genome sequence of enterohemorrhagic Escherichia coli O157:H7 and genomic comparison with a laboratory strain K-12.</title>
        <authorList>
            <person name="Hayashi T."/>
            <person name="Makino K."/>
            <person name="Ohnishi M."/>
            <person name="Kurokawa K."/>
            <person name="Ishii K."/>
            <person name="Yokoyama K."/>
            <person name="Han C.-G."/>
            <person name="Ohtsubo E."/>
            <person name="Nakayama K."/>
            <person name="Murata T."/>
            <person name="Tanaka M."/>
            <person name="Tobe T."/>
            <person name="Iida T."/>
            <person name="Takami H."/>
            <person name="Honda T."/>
            <person name="Sasakawa C."/>
            <person name="Ogasawara N."/>
            <person name="Yasunaga T."/>
            <person name="Kuhara S."/>
            <person name="Shiba T."/>
            <person name="Hattori M."/>
            <person name="Shinagawa H."/>
        </authorList>
    </citation>
    <scope>NUCLEOTIDE SEQUENCE [LARGE SCALE GENOMIC DNA]</scope>
    <source>
        <strain>O157:H7 / Sakai / RIMD 0509952 / EHEC</strain>
    </source>
</reference>